<proteinExistence type="inferred from homology"/>
<dbReference type="EC" id="6.1.1.10" evidence="1"/>
<dbReference type="EMBL" id="AE006470">
    <property type="protein sequence ID" value="AAM72204.1"/>
    <property type="molecule type" value="Genomic_DNA"/>
</dbReference>
<dbReference type="RefSeq" id="NP_661862.1">
    <property type="nucleotide sequence ID" value="NC_002932.3"/>
</dbReference>
<dbReference type="RefSeq" id="WP_010932649.1">
    <property type="nucleotide sequence ID" value="NC_002932.3"/>
</dbReference>
<dbReference type="SMR" id="P59077"/>
<dbReference type="STRING" id="194439.CT0969"/>
<dbReference type="EnsemblBacteria" id="AAM72204">
    <property type="protein sequence ID" value="AAM72204"/>
    <property type="gene ID" value="CT0969"/>
</dbReference>
<dbReference type="KEGG" id="cte:CT0969"/>
<dbReference type="PATRIC" id="fig|194439.7.peg.879"/>
<dbReference type="eggNOG" id="COG0073">
    <property type="taxonomic scope" value="Bacteria"/>
</dbReference>
<dbReference type="eggNOG" id="COG0143">
    <property type="taxonomic scope" value="Bacteria"/>
</dbReference>
<dbReference type="HOGENOM" id="CLU_009710_1_2_10"/>
<dbReference type="OrthoDB" id="9810191at2"/>
<dbReference type="Proteomes" id="UP000001007">
    <property type="component" value="Chromosome"/>
</dbReference>
<dbReference type="GO" id="GO:0005829">
    <property type="term" value="C:cytosol"/>
    <property type="evidence" value="ECO:0007669"/>
    <property type="project" value="TreeGrafter"/>
</dbReference>
<dbReference type="GO" id="GO:0005524">
    <property type="term" value="F:ATP binding"/>
    <property type="evidence" value="ECO:0007669"/>
    <property type="project" value="UniProtKB-UniRule"/>
</dbReference>
<dbReference type="GO" id="GO:0046872">
    <property type="term" value="F:metal ion binding"/>
    <property type="evidence" value="ECO:0007669"/>
    <property type="project" value="UniProtKB-KW"/>
</dbReference>
<dbReference type="GO" id="GO:0004825">
    <property type="term" value="F:methionine-tRNA ligase activity"/>
    <property type="evidence" value="ECO:0007669"/>
    <property type="project" value="UniProtKB-UniRule"/>
</dbReference>
<dbReference type="GO" id="GO:0000049">
    <property type="term" value="F:tRNA binding"/>
    <property type="evidence" value="ECO:0007669"/>
    <property type="project" value="UniProtKB-KW"/>
</dbReference>
<dbReference type="GO" id="GO:0006431">
    <property type="term" value="P:methionyl-tRNA aminoacylation"/>
    <property type="evidence" value="ECO:0007669"/>
    <property type="project" value="UniProtKB-UniRule"/>
</dbReference>
<dbReference type="CDD" id="cd07957">
    <property type="entry name" value="Anticodon_Ia_Met"/>
    <property type="match status" value="1"/>
</dbReference>
<dbReference type="CDD" id="cd00814">
    <property type="entry name" value="MetRS_core"/>
    <property type="match status" value="1"/>
</dbReference>
<dbReference type="CDD" id="cd02800">
    <property type="entry name" value="tRNA_bind_EcMetRS_like"/>
    <property type="match status" value="1"/>
</dbReference>
<dbReference type="FunFam" id="2.20.28.20:FF:000001">
    <property type="entry name" value="Methionine--tRNA ligase"/>
    <property type="match status" value="1"/>
</dbReference>
<dbReference type="FunFam" id="2.40.50.140:FF:000042">
    <property type="entry name" value="Methionine--tRNA ligase"/>
    <property type="match status" value="1"/>
</dbReference>
<dbReference type="Gene3D" id="3.40.50.620">
    <property type="entry name" value="HUPs"/>
    <property type="match status" value="1"/>
</dbReference>
<dbReference type="Gene3D" id="1.10.730.10">
    <property type="entry name" value="Isoleucyl-tRNA Synthetase, Domain 1"/>
    <property type="match status" value="1"/>
</dbReference>
<dbReference type="Gene3D" id="2.20.28.20">
    <property type="entry name" value="Methionyl-tRNA synthetase, Zn-domain"/>
    <property type="match status" value="1"/>
</dbReference>
<dbReference type="Gene3D" id="2.40.50.140">
    <property type="entry name" value="Nucleic acid-binding proteins"/>
    <property type="match status" value="1"/>
</dbReference>
<dbReference type="HAMAP" id="MF_00098">
    <property type="entry name" value="Met_tRNA_synth_type1"/>
    <property type="match status" value="1"/>
</dbReference>
<dbReference type="InterPro" id="IPR001412">
    <property type="entry name" value="aa-tRNA-synth_I_CS"/>
</dbReference>
<dbReference type="InterPro" id="IPR041872">
    <property type="entry name" value="Anticodon_Met"/>
</dbReference>
<dbReference type="InterPro" id="IPR004495">
    <property type="entry name" value="Met-tRNA-synth_bsu_C"/>
</dbReference>
<dbReference type="InterPro" id="IPR023458">
    <property type="entry name" value="Met-tRNA_ligase_1"/>
</dbReference>
<dbReference type="InterPro" id="IPR014758">
    <property type="entry name" value="Met-tRNA_synth"/>
</dbReference>
<dbReference type="InterPro" id="IPR015413">
    <property type="entry name" value="Methionyl/Leucyl_tRNA_Synth"/>
</dbReference>
<dbReference type="InterPro" id="IPR033911">
    <property type="entry name" value="MetRS_core"/>
</dbReference>
<dbReference type="InterPro" id="IPR029038">
    <property type="entry name" value="MetRS_Zn"/>
</dbReference>
<dbReference type="InterPro" id="IPR012340">
    <property type="entry name" value="NA-bd_OB-fold"/>
</dbReference>
<dbReference type="InterPro" id="IPR014729">
    <property type="entry name" value="Rossmann-like_a/b/a_fold"/>
</dbReference>
<dbReference type="InterPro" id="IPR002547">
    <property type="entry name" value="tRNA-bd_dom"/>
</dbReference>
<dbReference type="InterPro" id="IPR009080">
    <property type="entry name" value="tRNAsynth_Ia_anticodon-bd"/>
</dbReference>
<dbReference type="NCBIfam" id="TIGR00398">
    <property type="entry name" value="metG"/>
    <property type="match status" value="1"/>
</dbReference>
<dbReference type="NCBIfam" id="TIGR00399">
    <property type="entry name" value="metG_C_term"/>
    <property type="match status" value="1"/>
</dbReference>
<dbReference type="NCBIfam" id="NF001100">
    <property type="entry name" value="PRK00133.1"/>
    <property type="match status" value="1"/>
</dbReference>
<dbReference type="PANTHER" id="PTHR45765">
    <property type="entry name" value="METHIONINE--TRNA LIGASE"/>
    <property type="match status" value="1"/>
</dbReference>
<dbReference type="PANTHER" id="PTHR45765:SF1">
    <property type="entry name" value="METHIONINE--TRNA LIGASE, CYTOPLASMIC"/>
    <property type="match status" value="1"/>
</dbReference>
<dbReference type="Pfam" id="PF19303">
    <property type="entry name" value="Anticodon_3"/>
    <property type="match status" value="1"/>
</dbReference>
<dbReference type="Pfam" id="PF09334">
    <property type="entry name" value="tRNA-synt_1g"/>
    <property type="match status" value="1"/>
</dbReference>
<dbReference type="Pfam" id="PF01588">
    <property type="entry name" value="tRNA_bind"/>
    <property type="match status" value="1"/>
</dbReference>
<dbReference type="PRINTS" id="PR01041">
    <property type="entry name" value="TRNASYNTHMET"/>
</dbReference>
<dbReference type="SUPFAM" id="SSF47323">
    <property type="entry name" value="Anticodon-binding domain of a subclass of class I aminoacyl-tRNA synthetases"/>
    <property type="match status" value="1"/>
</dbReference>
<dbReference type="SUPFAM" id="SSF57770">
    <property type="entry name" value="Methionyl-tRNA synthetase (MetRS), Zn-domain"/>
    <property type="match status" value="1"/>
</dbReference>
<dbReference type="SUPFAM" id="SSF50249">
    <property type="entry name" value="Nucleic acid-binding proteins"/>
    <property type="match status" value="1"/>
</dbReference>
<dbReference type="SUPFAM" id="SSF52374">
    <property type="entry name" value="Nucleotidylyl transferase"/>
    <property type="match status" value="1"/>
</dbReference>
<dbReference type="PROSITE" id="PS00178">
    <property type="entry name" value="AA_TRNA_LIGASE_I"/>
    <property type="match status" value="1"/>
</dbReference>
<dbReference type="PROSITE" id="PS50886">
    <property type="entry name" value="TRBD"/>
    <property type="match status" value="1"/>
</dbReference>
<reference key="1">
    <citation type="journal article" date="2002" name="Proc. Natl. Acad. Sci. U.S.A.">
        <title>The complete genome sequence of Chlorobium tepidum TLS, a photosynthetic, anaerobic, green-sulfur bacterium.</title>
        <authorList>
            <person name="Eisen J.A."/>
            <person name="Nelson K.E."/>
            <person name="Paulsen I.T."/>
            <person name="Heidelberg J.F."/>
            <person name="Wu M."/>
            <person name="Dodson R.J."/>
            <person name="DeBoy R.T."/>
            <person name="Gwinn M.L."/>
            <person name="Nelson W.C."/>
            <person name="Haft D.H."/>
            <person name="Hickey E.K."/>
            <person name="Peterson J.D."/>
            <person name="Durkin A.S."/>
            <person name="Kolonay J.F."/>
            <person name="Yang F."/>
            <person name="Holt I.E."/>
            <person name="Umayam L.A."/>
            <person name="Mason T.M."/>
            <person name="Brenner M."/>
            <person name="Shea T.P."/>
            <person name="Parksey D.S."/>
            <person name="Nierman W.C."/>
            <person name="Feldblyum T.V."/>
            <person name="Hansen C.L."/>
            <person name="Craven M.B."/>
            <person name="Radune D."/>
            <person name="Vamathevan J.J."/>
            <person name="Khouri H.M."/>
            <person name="White O."/>
            <person name="Gruber T.M."/>
            <person name="Ketchum K.A."/>
            <person name="Venter J.C."/>
            <person name="Tettelin H."/>
            <person name="Bryant D.A."/>
            <person name="Fraser C.M."/>
        </authorList>
    </citation>
    <scope>NUCLEOTIDE SEQUENCE [LARGE SCALE GENOMIC DNA]</scope>
    <source>
        <strain>ATCC 49652 / DSM 12025 / NBRC 103806 / TLS</strain>
    </source>
</reference>
<comment type="function">
    <text evidence="1">Is required not only for elongation of protein synthesis but also for the initiation of all mRNA translation through initiator tRNA(fMet) aminoacylation.</text>
</comment>
<comment type="catalytic activity">
    <reaction evidence="1">
        <text>tRNA(Met) + L-methionine + ATP = L-methionyl-tRNA(Met) + AMP + diphosphate</text>
        <dbReference type="Rhea" id="RHEA:13481"/>
        <dbReference type="Rhea" id="RHEA-COMP:9667"/>
        <dbReference type="Rhea" id="RHEA-COMP:9698"/>
        <dbReference type="ChEBI" id="CHEBI:30616"/>
        <dbReference type="ChEBI" id="CHEBI:33019"/>
        <dbReference type="ChEBI" id="CHEBI:57844"/>
        <dbReference type="ChEBI" id="CHEBI:78442"/>
        <dbReference type="ChEBI" id="CHEBI:78530"/>
        <dbReference type="ChEBI" id="CHEBI:456215"/>
        <dbReference type="EC" id="6.1.1.10"/>
    </reaction>
</comment>
<comment type="cofactor">
    <cofactor evidence="1">
        <name>Zn(2+)</name>
        <dbReference type="ChEBI" id="CHEBI:29105"/>
    </cofactor>
    <text evidence="1">Binds 1 zinc ion per subunit.</text>
</comment>
<comment type="subunit">
    <text evidence="1">Homodimer.</text>
</comment>
<comment type="subcellular location">
    <subcellularLocation>
        <location evidence="1">Cytoplasm</location>
    </subcellularLocation>
</comment>
<comment type="similarity">
    <text evidence="1">Belongs to the class-I aminoacyl-tRNA synthetase family. MetG type 1 subfamily.</text>
</comment>
<gene>
    <name evidence="1" type="primary">metG</name>
    <name type="synonym">metS</name>
    <name type="ordered locus">CT0969</name>
</gene>
<protein>
    <recommendedName>
        <fullName evidence="1">Methionine--tRNA ligase</fullName>
        <ecNumber evidence="1">6.1.1.10</ecNumber>
    </recommendedName>
    <alternativeName>
        <fullName evidence="1">Methionyl-tRNA synthetase</fullName>
        <shortName evidence="1">MetRS</shortName>
    </alternativeName>
</protein>
<accession>P59077</accession>
<name>SYM_CHLTE</name>
<feature type="chain" id="PRO_0000139122" description="Methionine--tRNA ligase">
    <location>
        <begin position="1"/>
        <end position="703"/>
    </location>
</feature>
<feature type="domain" description="tRNA-binding" evidence="1">
    <location>
        <begin position="602"/>
        <end position="703"/>
    </location>
</feature>
<feature type="short sequence motif" description="'HIGH' region">
    <location>
        <begin position="15"/>
        <end position="25"/>
    </location>
</feature>
<feature type="short sequence motif" description="'KMSKS' region">
    <location>
        <begin position="345"/>
        <end position="349"/>
    </location>
</feature>
<feature type="binding site" evidence="1">
    <location>
        <position position="147"/>
    </location>
    <ligand>
        <name>Zn(2+)</name>
        <dbReference type="ChEBI" id="CHEBI:29105"/>
    </ligand>
</feature>
<feature type="binding site" evidence="1">
    <location>
        <position position="150"/>
    </location>
    <ligand>
        <name>Zn(2+)</name>
        <dbReference type="ChEBI" id="CHEBI:29105"/>
    </ligand>
</feature>
<feature type="binding site" evidence="1">
    <location>
        <position position="160"/>
    </location>
    <ligand>
        <name>Zn(2+)</name>
        <dbReference type="ChEBI" id="CHEBI:29105"/>
    </ligand>
</feature>
<feature type="binding site" evidence="1">
    <location>
        <position position="163"/>
    </location>
    <ligand>
        <name>Zn(2+)</name>
        <dbReference type="ChEBI" id="CHEBI:29105"/>
    </ligand>
</feature>
<feature type="binding site" evidence="1">
    <location>
        <position position="348"/>
    </location>
    <ligand>
        <name>ATP</name>
        <dbReference type="ChEBI" id="CHEBI:30616"/>
    </ligand>
</feature>
<organism>
    <name type="scientific">Chlorobaculum tepidum (strain ATCC 49652 / DSM 12025 / NBRC 103806 / TLS)</name>
    <name type="common">Chlorobium tepidum</name>
    <dbReference type="NCBI Taxonomy" id="194439"/>
    <lineage>
        <taxon>Bacteria</taxon>
        <taxon>Pseudomonadati</taxon>
        <taxon>Chlorobiota</taxon>
        <taxon>Chlorobiia</taxon>
        <taxon>Chlorobiales</taxon>
        <taxon>Chlorobiaceae</taxon>
        <taxon>Chlorobaculum</taxon>
    </lineage>
</organism>
<keyword id="KW-0030">Aminoacyl-tRNA synthetase</keyword>
<keyword id="KW-0067">ATP-binding</keyword>
<keyword id="KW-0963">Cytoplasm</keyword>
<keyword id="KW-0436">Ligase</keyword>
<keyword id="KW-0479">Metal-binding</keyword>
<keyword id="KW-0547">Nucleotide-binding</keyword>
<keyword id="KW-0648">Protein biosynthesis</keyword>
<keyword id="KW-1185">Reference proteome</keyword>
<keyword id="KW-0694">RNA-binding</keyword>
<keyword id="KW-0820">tRNA-binding</keyword>
<keyword id="KW-0862">Zinc</keyword>
<evidence type="ECO:0000255" key="1">
    <source>
        <dbReference type="HAMAP-Rule" id="MF_00098"/>
    </source>
</evidence>
<sequence>MTHIPKRTLVTTALPYANGPVHLGHLAGVYLPADIYVRYKRLCGHDVIHIGGSDEHGVPITITADKEGISPQEVVDRYHTMNAEAFAKCGISFDYYGRTSGPVHHQTAREFFLEIEKKGIFVKKTEKQFFDPKAGRFLSDRYITGTCPVCKTPGANGDQCEQCGTHLSPTELIDPKSKLSDATPELRETLHWYFPLGRYQKQLEAFVERHTGDWRSNVVNYSRTWLNQGLADRAITRDLAWGISLPLDSEEAKGKVLYVWFDAVLGYISFTKEWAEKQGDAELWRRYWQDPETRIINFIGKDNVVFHTLMFPAILMAWNEGRSEGRYELADNVPASEFMNFEGRKFSKSRNYAVYLGEFLERFPADTLRYSIAMNYPENKDTDFSWSDFQNRTNGELADTLGNFIKRSIDFTNSRFGGQVPADIDLEAWDSLGIDWLASFGKLEAAYDGFHFREATAQTMEIARFANRFLTESEPWKVIKVDPEAAGRTMAVSLNLCHTLALLFWPIVPETANRIWKMLGFEGTIDELVEPGNPVWRQALEPGLKKGHKLLGSSEILFSKIEDKDIEPEMKKIEALLAEAEQREAAKQPVPMTFKPEITFDDFQKIDLRVAKVVACEPVKKANKLLKLQLQVGSEQRQVLSGIAQYFTPEQMVGKNVVLVANLADRTMRGELSQGMILTVEGADGRLFLLEPQGEGINGNSVS</sequence>